<name>RBL_CALPL</name>
<protein>
    <recommendedName>
        <fullName evidence="1">Ribulose bisphosphate carboxylase large chain</fullName>
        <shortName evidence="1">RuBisCO large subunit</shortName>
        <ecNumber evidence="1">4.1.1.39</ecNumber>
    </recommendedName>
</protein>
<comment type="function">
    <text evidence="1">RuBisCO catalyzes two reactions: the carboxylation of D-ribulose 1,5-bisphosphate, the primary event in carbon dioxide fixation, as well as the oxidative fragmentation of the pentose substrate in the photorespiration process. Both reactions occur simultaneously and in competition at the same active site.</text>
</comment>
<comment type="catalytic activity">
    <reaction evidence="1">
        <text>2 (2R)-3-phosphoglycerate + 2 H(+) = D-ribulose 1,5-bisphosphate + CO2 + H2O</text>
        <dbReference type="Rhea" id="RHEA:23124"/>
        <dbReference type="ChEBI" id="CHEBI:15377"/>
        <dbReference type="ChEBI" id="CHEBI:15378"/>
        <dbReference type="ChEBI" id="CHEBI:16526"/>
        <dbReference type="ChEBI" id="CHEBI:57870"/>
        <dbReference type="ChEBI" id="CHEBI:58272"/>
        <dbReference type="EC" id="4.1.1.39"/>
    </reaction>
</comment>
<comment type="catalytic activity">
    <reaction evidence="1">
        <text>D-ribulose 1,5-bisphosphate + O2 = 2-phosphoglycolate + (2R)-3-phosphoglycerate + 2 H(+)</text>
        <dbReference type="Rhea" id="RHEA:36631"/>
        <dbReference type="ChEBI" id="CHEBI:15378"/>
        <dbReference type="ChEBI" id="CHEBI:15379"/>
        <dbReference type="ChEBI" id="CHEBI:57870"/>
        <dbReference type="ChEBI" id="CHEBI:58033"/>
        <dbReference type="ChEBI" id="CHEBI:58272"/>
    </reaction>
</comment>
<comment type="cofactor">
    <cofactor evidence="1">
        <name>Mg(2+)</name>
        <dbReference type="ChEBI" id="CHEBI:18420"/>
    </cofactor>
    <text evidence="1">Binds 1 Mg(2+) ion per subunit.</text>
</comment>
<comment type="subunit">
    <text evidence="1">Heterohexadecamer of 8 large chains and 8 small chains; disulfide-linked. The disulfide link is formed within the large subunit homodimers.</text>
</comment>
<comment type="subcellular location">
    <subcellularLocation>
        <location>Plastid</location>
        <location>Chloroplast</location>
    </subcellularLocation>
</comment>
<comment type="PTM">
    <text evidence="1">The disulfide bond which can form in the large chain dimeric partners within the hexadecamer appears to be associated with oxidative stress and protein turnover.</text>
</comment>
<comment type="miscellaneous">
    <text evidence="1">The basic functional RuBisCO is composed of a large chain homodimer in a 'head-to-tail' conformation. In form I RuBisCO this homodimer is arranged in a barrel-like tetramer with the small subunits forming a tetrameric 'cap' on each end of the 'barrel'.</text>
</comment>
<comment type="similarity">
    <text evidence="1">Belongs to the RuBisCO large chain family. Type I subfamily.</text>
</comment>
<reference key="1">
    <citation type="journal article" date="1992" name="Science">
        <title>Carnivorous plants: phylogeny and structural evolution.</title>
        <authorList>
            <person name="Albert V.A."/>
            <person name="Williams S.E."/>
            <person name="Chase M.W."/>
        </authorList>
    </citation>
    <scope>NUCLEOTIDE SEQUENCE [GENOMIC DNA]</scope>
</reference>
<dbReference type="EC" id="4.1.1.39" evidence="1"/>
<dbReference type="EMBL" id="L02431">
    <property type="protein sequence ID" value="AAA84096.2"/>
    <property type="molecule type" value="Genomic_DNA"/>
</dbReference>
<dbReference type="SMR" id="P28388"/>
<dbReference type="GO" id="GO:0009507">
    <property type="term" value="C:chloroplast"/>
    <property type="evidence" value="ECO:0007669"/>
    <property type="project" value="UniProtKB-SubCell"/>
</dbReference>
<dbReference type="GO" id="GO:0000287">
    <property type="term" value="F:magnesium ion binding"/>
    <property type="evidence" value="ECO:0007669"/>
    <property type="project" value="InterPro"/>
</dbReference>
<dbReference type="GO" id="GO:0004497">
    <property type="term" value="F:monooxygenase activity"/>
    <property type="evidence" value="ECO:0007669"/>
    <property type="project" value="UniProtKB-KW"/>
</dbReference>
<dbReference type="GO" id="GO:0016984">
    <property type="term" value="F:ribulose-bisphosphate carboxylase activity"/>
    <property type="evidence" value="ECO:0007669"/>
    <property type="project" value="UniProtKB-EC"/>
</dbReference>
<dbReference type="GO" id="GO:0009853">
    <property type="term" value="P:photorespiration"/>
    <property type="evidence" value="ECO:0007669"/>
    <property type="project" value="UniProtKB-KW"/>
</dbReference>
<dbReference type="GO" id="GO:0019253">
    <property type="term" value="P:reductive pentose-phosphate cycle"/>
    <property type="evidence" value="ECO:0007669"/>
    <property type="project" value="UniProtKB-KW"/>
</dbReference>
<dbReference type="CDD" id="cd08212">
    <property type="entry name" value="RuBisCO_large_I"/>
    <property type="match status" value="1"/>
</dbReference>
<dbReference type="FunFam" id="3.20.20.110:FF:000001">
    <property type="entry name" value="Ribulose bisphosphate carboxylase large chain"/>
    <property type="match status" value="1"/>
</dbReference>
<dbReference type="FunFam" id="3.30.70.150:FF:000001">
    <property type="entry name" value="Ribulose bisphosphate carboxylase large chain"/>
    <property type="match status" value="1"/>
</dbReference>
<dbReference type="Gene3D" id="3.20.20.110">
    <property type="entry name" value="Ribulose bisphosphate carboxylase, large subunit, C-terminal domain"/>
    <property type="match status" value="1"/>
</dbReference>
<dbReference type="Gene3D" id="3.30.70.150">
    <property type="entry name" value="RuBisCO large subunit, N-terminal domain"/>
    <property type="match status" value="1"/>
</dbReference>
<dbReference type="HAMAP" id="MF_01338">
    <property type="entry name" value="RuBisCO_L_type1"/>
    <property type="match status" value="1"/>
</dbReference>
<dbReference type="InterPro" id="IPR033966">
    <property type="entry name" value="RuBisCO"/>
</dbReference>
<dbReference type="InterPro" id="IPR020878">
    <property type="entry name" value="RuBisCo_large_chain_AS"/>
</dbReference>
<dbReference type="InterPro" id="IPR000685">
    <property type="entry name" value="RuBisCO_lsu_C"/>
</dbReference>
<dbReference type="InterPro" id="IPR036376">
    <property type="entry name" value="RuBisCO_lsu_C_sf"/>
</dbReference>
<dbReference type="InterPro" id="IPR017443">
    <property type="entry name" value="RuBisCO_lsu_fd_N"/>
</dbReference>
<dbReference type="InterPro" id="IPR036422">
    <property type="entry name" value="RuBisCO_lsu_N_sf"/>
</dbReference>
<dbReference type="InterPro" id="IPR020888">
    <property type="entry name" value="RuBisCO_lsuI"/>
</dbReference>
<dbReference type="NCBIfam" id="NF003252">
    <property type="entry name" value="PRK04208.1"/>
    <property type="match status" value="1"/>
</dbReference>
<dbReference type="PANTHER" id="PTHR42704">
    <property type="entry name" value="RIBULOSE BISPHOSPHATE CARBOXYLASE"/>
    <property type="match status" value="1"/>
</dbReference>
<dbReference type="PANTHER" id="PTHR42704:SF15">
    <property type="entry name" value="RIBULOSE BISPHOSPHATE CARBOXYLASE LARGE CHAIN"/>
    <property type="match status" value="1"/>
</dbReference>
<dbReference type="Pfam" id="PF00016">
    <property type="entry name" value="RuBisCO_large"/>
    <property type="match status" value="1"/>
</dbReference>
<dbReference type="Pfam" id="PF02788">
    <property type="entry name" value="RuBisCO_large_N"/>
    <property type="match status" value="1"/>
</dbReference>
<dbReference type="SFLD" id="SFLDG01052">
    <property type="entry name" value="RuBisCO"/>
    <property type="match status" value="1"/>
</dbReference>
<dbReference type="SFLD" id="SFLDS00014">
    <property type="entry name" value="RuBisCO"/>
    <property type="match status" value="1"/>
</dbReference>
<dbReference type="SFLD" id="SFLDG00301">
    <property type="entry name" value="RuBisCO-like_proteins"/>
    <property type="match status" value="1"/>
</dbReference>
<dbReference type="SUPFAM" id="SSF51649">
    <property type="entry name" value="RuBisCo, C-terminal domain"/>
    <property type="match status" value="1"/>
</dbReference>
<dbReference type="SUPFAM" id="SSF54966">
    <property type="entry name" value="RuBisCO, large subunit, small (N-terminal) domain"/>
    <property type="match status" value="1"/>
</dbReference>
<dbReference type="PROSITE" id="PS00157">
    <property type="entry name" value="RUBISCO_LARGE"/>
    <property type="match status" value="1"/>
</dbReference>
<keyword id="KW-0113">Calvin cycle</keyword>
<keyword id="KW-0120">Carbon dioxide fixation</keyword>
<keyword id="KW-0150">Chloroplast</keyword>
<keyword id="KW-1015">Disulfide bond</keyword>
<keyword id="KW-0456">Lyase</keyword>
<keyword id="KW-0460">Magnesium</keyword>
<keyword id="KW-0479">Metal-binding</keyword>
<keyword id="KW-0488">Methylation</keyword>
<keyword id="KW-0503">Monooxygenase</keyword>
<keyword id="KW-0560">Oxidoreductase</keyword>
<keyword id="KW-0601">Photorespiration</keyword>
<keyword id="KW-0602">Photosynthesis</keyword>
<keyword id="KW-0934">Plastid</keyword>
<evidence type="ECO:0000255" key="1">
    <source>
        <dbReference type="HAMAP-Rule" id="MF_01338"/>
    </source>
</evidence>
<feature type="chain" id="PRO_0000062392" description="Ribulose bisphosphate carboxylase large chain">
    <location>
        <begin position="1" status="less than"/>
        <end position="466"/>
    </location>
</feature>
<feature type="active site" description="Proton acceptor" evidence="1">
    <location>
        <position position="166"/>
    </location>
</feature>
<feature type="active site" description="Proton acceptor" evidence="1">
    <location>
        <position position="285"/>
    </location>
</feature>
<feature type="binding site" description="in homodimeric partner" evidence="1">
    <location>
        <position position="114"/>
    </location>
    <ligand>
        <name>substrate</name>
    </ligand>
</feature>
<feature type="binding site" evidence="1">
    <location>
        <position position="164"/>
    </location>
    <ligand>
        <name>substrate</name>
    </ligand>
</feature>
<feature type="binding site" evidence="1">
    <location>
        <position position="168"/>
    </location>
    <ligand>
        <name>substrate</name>
    </ligand>
</feature>
<feature type="binding site" description="via carbamate group" evidence="1">
    <location>
        <position position="192"/>
    </location>
    <ligand>
        <name>Mg(2+)</name>
        <dbReference type="ChEBI" id="CHEBI:18420"/>
    </ligand>
</feature>
<feature type="binding site" evidence="1">
    <location>
        <position position="194"/>
    </location>
    <ligand>
        <name>Mg(2+)</name>
        <dbReference type="ChEBI" id="CHEBI:18420"/>
    </ligand>
</feature>
<feature type="binding site" evidence="1">
    <location>
        <position position="195"/>
    </location>
    <ligand>
        <name>Mg(2+)</name>
        <dbReference type="ChEBI" id="CHEBI:18420"/>
    </ligand>
</feature>
<feature type="binding site" evidence="1">
    <location>
        <position position="286"/>
    </location>
    <ligand>
        <name>substrate</name>
    </ligand>
</feature>
<feature type="binding site" evidence="1">
    <location>
        <position position="318"/>
    </location>
    <ligand>
        <name>substrate</name>
    </ligand>
</feature>
<feature type="binding site" evidence="1">
    <location>
        <position position="370"/>
    </location>
    <ligand>
        <name>substrate</name>
    </ligand>
</feature>
<feature type="site" description="Transition state stabilizer" evidence="1">
    <location>
        <position position="325"/>
    </location>
</feature>
<feature type="modified residue" description="N6,N6,N6-trimethyllysine" evidence="1">
    <location>
        <position position="5"/>
    </location>
</feature>
<feature type="modified residue" description="N6-carboxylysine" evidence="1">
    <location>
        <position position="192"/>
    </location>
</feature>
<feature type="disulfide bond" description="Interchain; in linked form" evidence="1">
    <location>
        <position position="238"/>
    </location>
</feature>
<feature type="non-terminal residue">
    <location>
        <position position="1"/>
    </location>
</feature>
<proteinExistence type="inferred from homology"/>
<sequence>SVGFKAGVKDYKLNYYTPEYTPKDTDTLAAFRVTPQPGVPPEEAGAAVAAESSTGTWTTVWTDGLTSLDRYKGRCYHIEPVAGEENQYICYVAYPLDLFEEGSVTNMFTSIVGNVFGFKALRALRLEDLRIPVAYVKTFQGPPHGIQVERDKLNKYGRPLLGCTIKPKLGLSAKNYGRAVYECLRGGLDFTKDDENVNSQPFMRWRDRFLFCAEALYKAQAETGEIKGHYLNATAGTCEEMIKRAVFARELGVPIVMHDYLTGGFTANTSLAHYCRDNGLLLHIHRAMHAVIDRQKNHGIHFRVLAKALRMSGGDHIHSGTVVGKLEGEREITLGFVDLLRDDFIEKDRSRGIYFTQDWVSLPGVLPVASGGIHVWHMPALTEIFGDDSVLQFGGGTLGHPWGNRPGAVANRVALEACVQARNEGRDLAREGNEIIREACKWSLELAAACEVWKEIKFEFEAMDTL</sequence>
<organism>
    <name type="scientific">Caltha palustris</name>
    <name type="common">Yellow marsh marigold</name>
    <dbReference type="NCBI Taxonomy" id="3449"/>
    <lineage>
        <taxon>Eukaryota</taxon>
        <taxon>Viridiplantae</taxon>
        <taxon>Streptophyta</taxon>
        <taxon>Embryophyta</taxon>
        <taxon>Tracheophyta</taxon>
        <taxon>Spermatophyta</taxon>
        <taxon>Magnoliopsida</taxon>
        <taxon>Ranunculales</taxon>
        <taxon>Ranunculaceae</taxon>
        <taxon>Ranunculoideae</taxon>
        <taxon>Caltheae</taxon>
        <taxon>Caltha</taxon>
    </lineage>
</organism>
<geneLocation type="chloroplast"/>
<accession>P28388</accession>
<gene>
    <name evidence="1" type="primary">rbcL</name>
</gene>